<feature type="chain" id="PRO_0000116154" description="Uncharacterized gene 1 protein">
    <location>
        <begin position="1"/>
        <end position="202"/>
    </location>
</feature>
<feature type="region of interest" description="Disordered" evidence="1">
    <location>
        <begin position="1"/>
        <end position="32"/>
    </location>
</feature>
<feature type="region of interest" description="Disordered" evidence="1">
    <location>
        <begin position="46"/>
        <end position="95"/>
    </location>
</feature>
<feature type="compositionally biased region" description="Low complexity" evidence="1">
    <location>
        <begin position="47"/>
        <end position="79"/>
    </location>
</feature>
<organismHost>
    <name type="scientific">Equus caballus</name>
    <name type="common">Horse</name>
    <dbReference type="NCBI Taxonomy" id="9796"/>
</organismHost>
<reference evidence="2" key="1">
    <citation type="journal article" date="1996" name="J. Equine Sci.">
        <title>Nucleotide sequences of open reading frames 1, 24 and 71 of an attenuated equine herpesvirus-1.</title>
        <authorList>
            <person name="Kirisawa R."/>
            <person name="Kobayashi T."/>
            <person name="Kawakami Y."/>
            <person name="Iwai H."/>
        </authorList>
    </citation>
    <scope>NUCLEOTIDE SEQUENCE [GENOMIC DNA]</scope>
</reference>
<sequence>MRPEGVSRGRASSVSISMCPPPPNGARRASLGCAPPLNSRPVCCAPSSVSLSSSSSRRSMPSLGSSRSSSLPSTGSLRSITRDPERLPSRPPSYTAINPECLLERGAERPRAWTASVMTAPPSYSEALCQAPPAYELVPELSYHPTQDPRGVYSSRSDPHQTSRRRQNPICIFIIVVATMLLILGLLLTITLSSLTNGKKEK</sequence>
<evidence type="ECO:0000256" key="1">
    <source>
        <dbReference type="SAM" id="MobiDB-lite"/>
    </source>
</evidence>
<evidence type="ECO:0000312" key="2">
    <source>
        <dbReference type="EMBL" id="BAA20031.1"/>
    </source>
</evidence>
<gene>
    <name type="ordered locus">1</name>
</gene>
<organism>
    <name type="scientific">Equine herpesvirus 1 (strain HH1)</name>
    <name type="common">EHV-1</name>
    <name type="synonym">Equine abortion virus</name>
    <dbReference type="NCBI Taxonomy" id="310537"/>
    <lineage>
        <taxon>Viruses</taxon>
        <taxon>Duplodnaviria</taxon>
        <taxon>Heunggongvirae</taxon>
        <taxon>Peploviricota</taxon>
        <taxon>Herviviricetes</taxon>
        <taxon>Herpesvirales</taxon>
        <taxon>Orthoherpesviridae</taxon>
        <taxon>Alphaherpesvirinae</taxon>
        <taxon>Varicellovirus</taxon>
        <taxon>Varicellovirus equidalpha1</taxon>
        <taxon>Equid alphaherpesvirus 1</taxon>
    </lineage>
</organism>
<proteinExistence type="predicted"/>
<dbReference type="EMBL" id="D88589">
    <property type="protein sequence ID" value="BAA20031.1"/>
    <property type="molecule type" value="Genomic_DNA"/>
</dbReference>
<dbReference type="SMR" id="P84450"/>
<dbReference type="KEGG" id="vg:1487546"/>
<name>VG01_EHV1H</name>
<protein>
    <recommendedName>
        <fullName>Uncharacterized gene 1 protein</fullName>
    </recommendedName>
</protein>
<accession>P84450</accession>
<accession>Q6LEL8</accession>